<gene>
    <name evidence="1" type="primary">pcn</name>
    <name type="ordered locus">Tpen_0624</name>
</gene>
<name>PCNA_THEPD</name>
<organism>
    <name type="scientific">Thermofilum pendens (strain DSM 2475 / Hrk 5)</name>
    <dbReference type="NCBI Taxonomy" id="368408"/>
    <lineage>
        <taxon>Archaea</taxon>
        <taxon>Thermoproteota</taxon>
        <taxon>Thermoprotei</taxon>
        <taxon>Thermofilales</taxon>
        <taxon>Thermofilaceae</taxon>
        <taxon>Thermofilum</taxon>
    </lineage>
</organism>
<proteinExistence type="inferred from homology"/>
<evidence type="ECO:0000255" key="1">
    <source>
        <dbReference type="HAMAP-Rule" id="MF_00317"/>
    </source>
</evidence>
<dbReference type="EMBL" id="CP000505">
    <property type="protein sequence ID" value="ABL78028.1"/>
    <property type="molecule type" value="Genomic_DNA"/>
</dbReference>
<dbReference type="RefSeq" id="WP_011752293.1">
    <property type="nucleotide sequence ID" value="NC_008698.1"/>
</dbReference>
<dbReference type="SMR" id="A1RXU8"/>
<dbReference type="STRING" id="368408.Tpen_0624"/>
<dbReference type="EnsemblBacteria" id="ABL78028">
    <property type="protein sequence ID" value="ABL78028"/>
    <property type="gene ID" value="Tpen_0624"/>
</dbReference>
<dbReference type="GeneID" id="4601411"/>
<dbReference type="KEGG" id="tpe:Tpen_0624"/>
<dbReference type="eggNOG" id="arCOG00488">
    <property type="taxonomic scope" value="Archaea"/>
</dbReference>
<dbReference type="HOGENOM" id="CLU_043978_1_0_2"/>
<dbReference type="OrthoDB" id="14749at2157"/>
<dbReference type="Proteomes" id="UP000000641">
    <property type="component" value="Chromosome"/>
</dbReference>
<dbReference type="GO" id="GO:0003677">
    <property type="term" value="F:DNA binding"/>
    <property type="evidence" value="ECO:0007669"/>
    <property type="project" value="UniProtKB-UniRule"/>
</dbReference>
<dbReference type="GO" id="GO:0030337">
    <property type="term" value="F:DNA polymerase processivity factor activity"/>
    <property type="evidence" value="ECO:0007669"/>
    <property type="project" value="UniProtKB-UniRule"/>
</dbReference>
<dbReference type="GO" id="GO:0006272">
    <property type="term" value="P:leading strand elongation"/>
    <property type="evidence" value="ECO:0007669"/>
    <property type="project" value="TreeGrafter"/>
</dbReference>
<dbReference type="GO" id="GO:0006275">
    <property type="term" value="P:regulation of DNA replication"/>
    <property type="evidence" value="ECO:0007669"/>
    <property type="project" value="UniProtKB-UniRule"/>
</dbReference>
<dbReference type="CDD" id="cd00577">
    <property type="entry name" value="PCNA"/>
    <property type="match status" value="1"/>
</dbReference>
<dbReference type="Gene3D" id="3.70.10.10">
    <property type="match status" value="1"/>
</dbReference>
<dbReference type="HAMAP" id="MF_00317">
    <property type="entry name" value="DNApol_clamp_arch"/>
    <property type="match status" value="1"/>
</dbReference>
<dbReference type="InterPro" id="IPR046938">
    <property type="entry name" value="DNA_clamp_sf"/>
</dbReference>
<dbReference type="InterPro" id="IPR000730">
    <property type="entry name" value="Pr_cel_nuc_antig"/>
</dbReference>
<dbReference type="InterPro" id="IPR022649">
    <property type="entry name" value="Pr_cel_nuc_antig_C"/>
</dbReference>
<dbReference type="InterPro" id="IPR022648">
    <property type="entry name" value="Pr_cel_nuc_antig_N"/>
</dbReference>
<dbReference type="NCBIfam" id="TIGR00590">
    <property type="entry name" value="pcna"/>
    <property type="match status" value="1"/>
</dbReference>
<dbReference type="NCBIfam" id="NF002221">
    <property type="entry name" value="PRK01115.1-4"/>
    <property type="match status" value="1"/>
</dbReference>
<dbReference type="PANTHER" id="PTHR11352">
    <property type="entry name" value="PROLIFERATING CELL NUCLEAR ANTIGEN"/>
    <property type="match status" value="1"/>
</dbReference>
<dbReference type="PANTHER" id="PTHR11352:SF0">
    <property type="entry name" value="PROLIFERATING CELL NUCLEAR ANTIGEN"/>
    <property type="match status" value="1"/>
</dbReference>
<dbReference type="Pfam" id="PF02747">
    <property type="entry name" value="PCNA_C"/>
    <property type="match status" value="1"/>
</dbReference>
<dbReference type="Pfam" id="PF00705">
    <property type="entry name" value="PCNA_N"/>
    <property type="match status" value="1"/>
</dbReference>
<dbReference type="PRINTS" id="PR00339">
    <property type="entry name" value="PCNACYCLIN"/>
</dbReference>
<dbReference type="SUPFAM" id="SSF55979">
    <property type="entry name" value="DNA clamp"/>
    <property type="match status" value="2"/>
</dbReference>
<keyword id="KW-0235">DNA replication</keyword>
<keyword id="KW-0238">DNA-binding</keyword>
<keyword id="KW-1185">Reference proteome</keyword>
<feature type="chain" id="PRO_1000072003" description="DNA polymerase sliding clamp">
    <location>
        <begin position="1"/>
        <end position="247"/>
    </location>
</feature>
<accession>A1RXU8</accession>
<comment type="function">
    <text evidence="1">Sliding clamp subunit that acts as a moving platform for DNA processing. Responsible for tethering the catalytic subunit of DNA polymerase and other proteins to DNA during high-speed replication.</text>
</comment>
<comment type="subunit">
    <text evidence="1">Homotrimer. The subunits circularize to form a toroid; DNA passes through its center. Replication factor C (RFC) is required to load the toroid on the DNA.</text>
</comment>
<comment type="similarity">
    <text evidence="1">Belongs to the PCNA family.</text>
</comment>
<sequence>MVKFVFPDAREWKYIIESLATIVDEANFVASPEGLKLRALDPGRIAMVDLFIPSNLFEEYSVDQETKISAVLDDIDKVLKRAKSDDKISFEVSQGRLIITLSGRAERRFKFPLIDIAGQELPSPKLNFTVAAKMLSDTFRDALKDASLVSESVKLKAEDESLWLLARSDKGEIESRFSIETGSLVEIDVKEAAEASYGIDFLDKIVSKAYRISDILGLRFATNMPLEMTFDIAGGGTLKYLLAPRME</sequence>
<protein>
    <recommendedName>
        <fullName evidence="1">DNA polymerase sliding clamp</fullName>
    </recommendedName>
    <alternativeName>
        <fullName evidence="1">Proliferating cell nuclear antigen homolog</fullName>
        <shortName evidence="1">PCNA</shortName>
    </alternativeName>
</protein>
<reference key="1">
    <citation type="journal article" date="2008" name="J. Bacteriol.">
        <title>Genome sequence of Thermofilum pendens reveals an exceptional loss of biosynthetic pathways without genome reduction.</title>
        <authorList>
            <person name="Anderson I."/>
            <person name="Rodriguez J."/>
            <person name="Susanti D."/>
            <person name="Porat I."/>
            <person name="Reich C."/>
            <person name="Ulrich L.E."/>
            <person name="Elkins J.G."/>
            <person name="Mavromatis K."/>
            <person name="Lykidis A."/>
            <person name="Kim E."/>
            <person name="Thompson L.S."/>
            <person name="Nolan M."/>
            <person name="Land M."/>
            <person name="Copeland A."/>
            <person name="Lapidus A."/>
            <person name="Lucas S."/>
            <person name="Detter C."/>
            <person name="Zhulin I.B."/>
            <person name="Olsen G.J."/>
            <person name="Whitman W."/>
            <person name="Mukhopadhyay B."/>
            <person name="Bristow J."/>
            <person name="Kyrpides N."/>
        </authorList>
    </citation>
    <scope>NUCLEOTIDE SEQUENCE [LARGE SCALE GENOMIC DNA]</scope>
    <source>
        <strain>DSM 2475 / Hrk 5</strain>
    </source>
</reference>